<accession>A4QKN8</accession>
<feature type="chain" id="PRO_0000344328" description="Small ribosomal subunit protein uS7cz/uS7cy">
    <location>
        <begin position="1"/>
        <end position="155"/>
    </location>
</feature>
<comment type="function">
    <text evidence="1">One of the primary rRNA binding proteins, it binds directly to 16S rRNA where it nucleates assembly of the head domain of the 30S subunit.</text>
</comment>
<comment type="subunit">
    <text evidence="1">Part of the 30S ribosomal subunit.</text>
</comment>
<comment type="subcellular location">
    <subcellularLocation>
        <location>Plastid</location>
        <location>Chloroplast</location>
    </subcellularLocation>
</comment>
<comment type="similarity">
    <text evidence="3">Belongs to the universal ribosomal protein uS7 family.</text>
</comment>
<geneLocation type="chloroplast"/>
<proteinExistence type="inferred from homology"/>
<reference key="1">
    <citation type="submission" date="2007-03" db="EMBL/GenBank/DDBJ databases">
        <title>Sequencing analysis of Capsella bursa-pastoris JO22 chloroplast DNA.</title>
        <authorList>
            <person name="Hosouchi T."/>
            <person name="Tsuruoka H."/>
            <person name="Kotani H."/>
        </authorList>
    </citation>
    <scope>NUCLEOTIDE SEQUENCE [LARGE SCALE GENOMIC DNA]</scope>
</reference>
<evidence type="ECO:0000250" key="1"/>
<evidence type="ECO:0000255" key="2">
    <source>
        <dbReference type="HAMAP-Rule" id="MF_00480"/>
    </source>
</evidence>
<evidence type="ECO:0000305" key="3"/>
<keyword id="KW-0150">Chloroplast</keyword>
<keyword id="KW-0934">Plastid</keyword>
<keyword id="KW-0687">Ribonucleoprotein</keyword>
<keyword id="KW-0689">Ribosomal protein</keyword>
<keyword id="KW-0694">RNA-binding</keyword>
<keyword id="KW-0699">rRNA-binding</keyword>
<protein>
    <recommendedName>
        <fullName evidence="2">Small ribosomal subunit protein uS7cz/uS7cy</fullName>
    </recommendedName>
    <alternativeName>
        <fullName>30S ribosomal protein S7, chloroplastic</fullName>
    </alternativeName>
</protein>
<organism>
    <name type="scientific">Capsella bursa-pastoris</name>
    <name type="common">Shepherd's purse</name>
    <name type="synonym">Thlaspi bursa-pastoris</name>
    <dbReference type="NCBI Taxonomy" id="3719"/>
    <lineage>
        <taxon>Eukaryota</taxon>
        <taxon>Viridiplantae</taxon>
        <taxon>Streptophyta</taxon>
        <taxon>Embryophyta</taxon>
        <taxon>Tracheophyta</taxon>
        <taxon>Spermatophyta</taxon>
        <taxon>Magnoliopsida</taxon>
        <taxon>eudicotyledons</taxon>
        <taxon>Gunneridae</taxon>
        <taxon>Pentapetalae</taxon>
        <taxon>rosids</taxon>
        <taxon>malvids</taxon>
        <taxon>Brassicales</taxon>
        <taxon>Brassicaceae</taxon>
        <taxon>Camelineae</taxon>
        <taxon>Capsella</taxon>
    </lineage>
</organism>
<name>RR7_CAPBU</name>
<sequence length="155" mass="17357">MSRRGTAEEKTAKSDPIYRNRLVNMLVNRILKHGKKSLAYQIIYRALKKIQQKTETNPLSVLRQAIRGVTPDIAVKARRVGGSTHQVPIEIGSTQGKALAIRWLLGASRKRPGRNMAFKLSSELVDAAKGSGDAIRKKEETHRMAEANRAFAHFR</sequence>
<gene>
    <name type="primary">rps7-A</name>
</gene>
<gene>
    <name type="primary">rps7-B</name>
</gene>
<dbReference type="EMBL" id="AP009371">
    <property type="protein sequence ID" value="BAF50243.1"/>
    <property type="molecule type" value="Genomic_DNA"/>
</dbReference>
<dbReference type="EMBL" id="AP009371">
    <property type="protein sequence ID" value="BAF50260.1"/>
    <property type="molecule type" value="Genomic_DNA"/>
</dbReference>
<dbReference type="SMR" id="A4QKN8"/>
<dbReference type="GO" id="GO:0009507">
    <property type="term" value="C:chloroplast"/>
    <property type="evidence" value="ECO:0007669"/>
    <property type="project" value="UniProtKB-SubCell"/>
</dbReference>
<dbReference type="GO" id="GO:0015935">
    <property type="term" value="C:small ribosomal subunit"/>
    <property type="evidence" value="ECO:0007669"/>
    <property type="project" value="InterPro"/>
</dbReference>
<dbReference type="GO" id="GO:0019843">
    <property type="term" value="F:rRNA binding"/>
    <property type="evidence" value="ECO:0007669"/>
    <property type="project" value="UniProtKB-UniRule"/>
</dbReference>
<dbReference type="GO" id="GO:0003735">
    <property type="term" value="F:structural constituent of ribosome"/>
    <property type="evidence" value="ECO:0007669"/>
    <property type="project" value="InterPro"/>
</dbReference>
<dbReference type="GO" id="GO:0006412">
    <property type="term" value="P:translation"/>
    <property type="evidence" value="ECO:0007669"/>
    <property type="project" value="UniProtKB-UniRule"/>
</dbReference>
<dbReference type="CDD" id="cd14871">
    <property type="entry name" value="uS7_Chloroplast"/>
    <property type="match status" value="1"/>
</dbReference>
<dbReference type="FunFam" id="1.10.455.10:FF:000001">
    <property type="entry name" value="30S ribosomal protein S7"/>
    <property type="match status" value="1"/>
</dbReference>
<dbReference type="Gene3D" id="1.10.455.10">
    <property type="entry name" value="Ribosomal protein S7 domain"/>
    <property type="match status" value="1"/>
</dbReference>
<dbReference type="HAMAP" id="MF_00480_B">
    <property type="entry name" value="Ribosomal_uS7_B"/>
    <property type="match status" value="1"/>
</dbReference>
<dbReference type="InterPro" id="IPR000235">
    <property type="entry name" value="Ribosomal_uS7"/>
</dbReference>
<dbReference type="InterPro" id="IPR005717">
    <property type="entry name" value="Ribosomal_uS7_bac/org-type"/>
</dbReference>
<dbReference type="InterPro" id="IPR020606">
    <property type="entry name" value="Ribosomal_uS7_CS"/>
</dbReference>
<dbReference type="InterPro" id="IPR023798">
    <property type="entry name" value="Ribosomal_uS7_dom"/>
</dbReference>
<dbReference type="InterPro" id="IPR036823">
    <property type="entry name" value="Ribosomal_uS7_dom_sf"/>
</dbReference>
<dbReference type="NCBIfam" id="TIGR01029">
    <property type="entry name" value="rpsG_bact"/>
    <property type="match status" value="1"/>
</dbReference>
<dbReference type="PANTHER" id="PTHR11205">
    <property type="entry name" value="RIBOSOMAL PROTEIN S7"/>
    <property type="match status" value="1"/>
</dbReference>
<dbReference type="Pfam" id="PF00177">
    <property type="entry name" value="Ribosomal_S7"/>
    <property type="match status" value="1"/>
</dbReference>
<dbReference type="PIRSF" id="PIRSF002122">
    <property type="entry name" value="RPS7p_RPS7a_RPS5e_RPS7o"/>
    <property type="match status" value="1"/>
</dbReference>
<dbReference type="SUPFAM" id="SSF47973">
    <property type="entry name" value="Ribosomal protein S7"/>
    <property type="match status" value="1"/>
</dbReference>
<dbReference type="PROSITE" id="PS00052">
    <property type="entry name" value="RIBOSOMAL_S7"/>
    <property type="match status" value="1"/>
</dbReference>